<accession>Q2VZR6</accession>
<protein>
    <recommendedName>
        <fullName evidence="1">Recombination protein RecR</fullName>
    </recommendedName>
</protein>
<reference key="1">
    <citation type="journal article" date="2005" name="DNA Res.">
        <title>Complete genome sequence of the facultative anaerobic magnetotactic bacterium Magnetospirillum sp. strain AMB-1.</title>
        <authorList>
            <person name="Matsunaga T."/>
            <person name="Okamura Y."/>
            <person name="Fukuda Y."/>
            <person name="Wahyudi A.T."/>
            <person name="Murase Y."/>
            <person name="Takeyama H."/>
        </authorList>
    </citation>
    <scope>NUCLEOTIDE SEQUENCE [LARGE SCALE GENOMIC DNA]</scope>
    <source>
        <strain>ATCC 700264 / AMB-1</strain>
    </source>
</reference>
<gene>
    <name evidence="1" type="primary">recR</name>
    <name type="ordered locus">amb4105</name>
</gene>
<dbReference type="EMBL" id="AP007255">
    <property type="protein sequence ID" value="BAE52909.1"/>
    <property type="molecule type" value="Genomic_DNA"/>
</dbReference>
<dbReference type="RefSeq" id="WP_011386455.1">
    <property type="nucleotide sequence ID" value="NC_007626.1"/>
</dbReference>
<dbReference type="SMR" id="Q2VZR6"/>
<dbReference type="STRING" id="342108.amb4105"/>
<dbReference type="KEGG" id="mag:amb4105"/>
<dbReference type="HOGENOM" id="CLU_060739_1_1_5"/>
<dbReference type="OrthoDB" id="9802672at2"/>
<dbReference type="Proteomes" id="UP000007058">
    <property type="component" value="Chromosome"/>
</dbReference>
<dbReference type="GO" id="GO:0003677">
    <property type="term" value="F:DNA binding"/>
    <property type="evidence" value="ECO:0007669"/>
    <property type="project" value="UniProtKB-UniRule"/>
</dbReference>
<dbReference type="GO" id="GO:0008270">
    <property type="term" value="F:zinc ion binding"/>
    <property type="evidence" value="ECO:0007669"/>
    <property type="project" value="UniProtKB-KW"/>
</dbReference>
<dbReference type="GO" id="GO:0006310">
    <property type="term" value="P:DNA recombination"/>
    <property type="evidence" value="ECO:0007669"/>
    <property type="project" value="UniProtKB-UniRule"/>
</dbReference>
<dbReference type="GO" id="GO:0006281">
    <property type="term" value="P:DNA repair"/>
    <property type="evidence" value="ECO:0007669"/>
    <property type="project" value="UniProtKB-UniRule"/>
</dbReference>
<dbReference type="CDD" id="cd01025">
    <property type="entry name" value="TOPRIM_recR"/>
    <property type="match status" value="1"/>
</dbReference>
<dbReference type="Gene3D" id="3.40.1360.10">
    <property type="match status" value="1"/>
</dbReference>
<dbReference type="Gene3D" id="1.10.8.420">
    <property type="entry name" value="RecR Domain 1"/>
    <property type="match status" value="1"/>
</dbReference>
<dbReference type="HAMAP" id="MF_00017">
    <property type="entry name" value="RecR"/>
    <property type="match status" value="1"/>
</dbReference>
<dbReference type="InterPro" id="IPR000093">
    <property type="entry name" value="DNA_Rcmb_RecR"/>
</dbReference>
<dbReference type="InterPro" id="IPR023627">
    <property type="entry name" value="Rcmb_RecR"/>
</dbReference>
<dbReference type="InterPro" id="IPR015967">
    <property type="entry name" value="Rcmb_RecR_Znf"/>
</dbReference>
<dbReference type="InterPro" id="IPR006171">
    <property type="entry name" value="TOPRIM_dom"/>
</dbReference>
<dbReference type="InterPro" id="IPR034137">
    <property type="entry name" value="TOPRIM_RecR"/>
</dbReference>
<dbReference type="NCBIfam" id="TIGR00615">
    <property type="entry name" value="recR"/>
    <property type="match status" value="1"/>
</dbReference>
<dbReference type="PANTHER" id="PTHR30446">
    <property type="entry name" value="RECOMBINATION PROTEIN RECR"/>
    <property type="match status" value="1"/>
</dbReference>
<dbReference type="PANTHER" id="PTHR30446:SF0">
    <property type="entry name" value="RECOMBINATION PROTEIN RECR"/>
    <property type="match status" value="1"/>
</dbReference>
<dbReference type="Pfam" id="PF21175">
    <property type="entry name" value="RecR_C"/>
    <property type="match status" value="1"/>
</dbReference>
<dbReference type="Pfam" id="PF21176">
    <property type="entry name" value="RecR_HhH"/>
    <property type="match status" value="1"/>
</dbReference>
<dbReference type="Pfam" id="PF02132">
    <property type="entry name" value="RecR_ZnF"/>
    <property type="match status" value="1"/>
</dbReference>
<dbReference type="Pfam" id="PF13662">
    <property type="entry name" value="Toprim_4"/>
    <property type="match status" value="1"/>
</dbReference>
<dbReference type="SMART" id="SM00493">
    <property type="entry name" value="TOPRIM"/>
    <property type="match status" value="1"/>
</dbReference>
<dbReference type="SUPFAM" id="SSF111304">
    <property type="entry name" value="Recombination protein RecR"/>
    <property type="match status" value="1"/>
</dbReference>
<dbReference type="PROSITE" id="PS01300">
    <property type="entry name" value="RECR"/>
    <property type="match status" value="1"/>
</dbReference>
<dbReference type="PROSITE" id="PS50880">
    <property type="entry name" value="TOPRIM"/>
    <property type="match status" value="1"/>
</dbReference>
<sequence length="197" mass="20817">MVGPEIERLIQLLSRLPGLGPRSARRAALRLVEKRESLLVPLAQAMADAAARVRTCSVCGNFDTIDPCAICADHRRDPSMLCVVEDVAGLWAMERTGSFKGRYAVLGGLLSALDGVGPEDLGIESLVARALDPAITEIILATPATVEGQTTAHYVAERLAPCNVTVSGLAHGVPVGGELDHLDDGTITAALRARRVF</sequence>
<comment type="function">
    <text evidence="1">May play a role in DNA repair. It seems to be involved in an RecBC-independent recombinational process of DNA repair. It may act with RecF and RecO.</text>
</comment>
<comment type="similarity">
    <text evidence="1">Belongs to the RecR family.</text>
</comment>
<feature type="chain" id="PRO_0000322906" description="Recombination protein RecR">
    <location>
        <begin position="1"/>
        <end position="197"/>
    </location>
</feature>
<feature type="domain" description="Toprim" evidence="1">
    <location>
        <begin position="79"/>
        <end position="174"/>
    </location>
</feature>
<feature type="zinc finger region" description="C4-type" evidence="1">
    <location>
        <begin position="56"/>
        <end position="71"/>
    </location>
</feature>
<proteinExistence type="inferred from homology"/>
<keyword id="KW-0227">DNA damage</keyword>
<keyword id="KW-0233">DNA recombination</keyword>
<keyword id="KW-0234">DNA repair</keyword>
<keyword id="KW-0479">Metal-binding</keyword>
<keyword id="KW-0862">Zinc</keyword>
<keyword id="KW-0863">Zinc-finger</keyword>
<name>RECR_PARM1</name>
<organism>
    <name type="scientific">Paramagnetospirillum magneticum (strain ATCC 700264 / AMB-1)</name>
    <name type="common">Magnetospirillum magneticum</name>
    <dbReference type="NCBI Taxonomy" id="342108"/>
    <lineage>
        <taxon>Bacteria</taxon>
        <taxon>Pseudomonadati</taxon>
        <taxon>Pseudomonadota</taxon>
        <taxon>Alphaproteobacteria</taxon>
        <taxon>Rhodospirillales</taxon>
        <taxon>Magnetospirillaceae</taxon>
        <taxon>Paramagnetospirillum</taxon>
    </lineage>
</organism>
<evidence type="ECO:0000255" key="1">
    <source>
        <dbReference type="HAMAP-Rule" id="MF_00017"/>
    </source>
</evidence>